<proteinExistence type="inferred from homology"/>
<accession>B0K364</accession>
<reference key="1">
    <citation type="submission" date="2008-01" db="EMBL/GenBank/DDBJ databases">
        <title>Complete sequence of Thermoanaerobacter sp. X514.</title>
        <authorList>
            <consortium name="US DOE Joint Genome Institute"/>
            <person name="Copeland A."/>
            <person name="Lucas S."/>
            <person name="Lapidus A."/>
            <person name="Barry K."/>
            <person name="Glavina del Rio T."/>
            <person name="Dalin E."/>
            <person name="Tice H."/>
            <person name="Pitluck S."/>
            <person name="Bruce D."/>
            <person name="Goodwin L."/>
            <person name="Saunders E."/>
            <person name="Brettin T."/>
            <person name="Detter J.C."/>
            <person name="Han C."/>
            <person name="Schmutz J."/>
            <person name="Larimer F."/>
            <person name="Land M."/>
            <person name="Hauser L."/>
            <person name="Kyrpides N."/>
            <person name="Kim E."/>
            <person name="Hemme C."/>
            <person name="Fields M.W."/>
            <person name="He Z."/>
            <person name="Zhou J."/>
            <person name="Richardson P."/>
        </authorList>
    </citation>
    <scope>NUCLEOTIDE SEQUENCE [LARGE SCALE GENOMIC DNA]</scope>
    <source>
        <strain>X514</strain>
    </source>
</reference>
<dbReference type="EC" id="6.3.2.1" evidence="1"/>
<dbReference type="EMBL" id="CP000923">
    <property type="protein sequence ID" value="ABY91736.1"/>
    <property type="molecule type" value="Genomic_DNA"/>
</dbReference>
<dbReference type="RefSeq" id="WP_009051763.1">
    <property type="nucleotide sequence ID" value="NC_010320.1"/>
</dbReference>
<dbReference type="SMR" id="B0K364"/>
<dbReference type="KEGG" id="tex:Teth514_0426"/>
<dbReference type="HOGENOM" id="CLU_047148_0_0_9"/>
<dbReference type="UniPathway" id="UPA00028">
    <property type="reaction ID" value="UER00005"/>
</dbReference>
<dbReference type="Proteomes" id="UP000002155">
    <property type="component" value="Chromosome"/>
</dbReference>
<dbReference type="GO" id="GO:0005829">
    <property type="term" value="C:cytosol"/>
    <property type="evidence" value="ECO:0007669"/>
    <property type="project" value="TreeGrafter"/>
</dbReference>
<dbReference type="GO" id="GO:0005524">
    <property type="term" value="F:ATP binding"/>
    <property type="evidence" value="ECO:0007669"/>
    <property type="project" value="UniProtKB-KW"/>
</dbReference>
<dbReference type="GO" id="GO:0004592">
    <property type="term" value="F:pantoate-beta-alanine ligase activity"/>
    <property type="evidence" value="ECO:0007669"/>
    <property type="project" value="UniProtKB-UniRule"/>
</dbReference>
<dbReference type="GO" id="GO:0015940">
    <property type="term" value="P:pantothenate biosynthetic process"/>
    <property type="evidence" value="ECO:0007669"/>
    <property type="project" value="UniProtKB-UniRule"/>
</dbReference>
<dbReference type="CDD" id="cd00560">
    <property type="entry name" value="PanC"/>
    <property type="match status" value="1"/>
</dbReference>
<dbReference type="FunFam" id="3.30.1300.10:FF:000001">
    <property type="entry name" value="Pantothenate synthetase"/>
    <property type="match status" value="1"/>
</dbReference>
<dbReference type="FunFam" id="3.40.50.620:FF:000013">
    <property type="entry name" value="Pantothenate synthetase"/>
    <property type="match status" value="1"/>
</dbReference>
<dbReference type="Gene3D" id="3.40.50.620">
    <property type="entry name" value="HUPs"/>
    <property type="match status" value="1"/>
</dbReference>
<dbReference type="Gene3D" id="3.30.1300.10">
    <property type="entry name" value="Pantoate-beta-alanine ligase, C-terminal domain"/>
    <property type="match status" value="1"/>
</dbReference>
<dbReference type="HAMAP" id="MF_00158">
    <property type="entry name" value="PanC"/>
    <property type="match status" value="1"/>
</dbReference>
<dbReference type="InterPro" id="IPR004821">
    <property type="entry name" value="Cyt_trans-like"/>
</dbReference>
<dbReference type="InterPro" id="IPR003721">
    <property type="entry name" value="Pantoate_ligase"/>
</dbReference>
<dbReference type="InterPro" id="IPR042176">
    <property type="entry name" value="Pantoate_ligase_C"/>
</dbReference>
<dbReference type="InterPro" id="IPR014729">
    <property type="entry name" value="Rossmann-like_a/b/a_fold"/>
</dbReference>
<dbReference type="NCBIfam" id="TIGR00125">
    <property type="entry name" value="cyt_tran_rel"/>
    <property type="match status" value="1"/>
</dbReference>
<dbReference type="NCBIfam" id="TIGR00018">
    <property type="entry name" value="panC"/>
    <property type="match status" value="1"/>
</dbReference>
<dbReference type="PANTHER" id="PTHR21299">
    <property type="entry name" value="CYTIDYLATE KINASE/PANTOATE-BETA-ALANINE LIGASE"/>
    <property type="match status" value="1"/>
</dbReference>
<dbReference type="PANTHER" id="PTHR21299:SF1">
    <property type="entry name" value="PANTOATE--BETA-ALANINE LIGASE"/>
    <property type="match status" value="1"/>
</dbReference>
<dbReference type="Pfam" id="PF02569">
    <property type="entry name" value="Pantoate_ligase"/>
    <property type="match status" value="1"/>
</dbReference>
<dbReference type="SUPFAM" id="SSF52374">
    <property type="entry name" value="Nucleotidylyl transferase"/>
    <property type="match status" value="1"/>
</dbReference>
<keyword id="KW-0067">ATP-binding</keyword>
<keyword id="KW-0963">Cytoplasm</keyword>
<keyword id="KW-0436">Ligase</keyword>
<keyword id="KW-0547">Nucleotide-binding</keyword>
<keyword id="KW-0566">Pantothenate biosynthesis</keyword>
<name>PANC_THEPX</name>
<comment type="function">
    <text evidence="1">Catalyzes the condensation of pantoate with beta-alanine in an ATP-dependent reaction via a pantoyl-adenylate intermediate.</text>
</comment>
<comment type="catalytic activity">
    <reaction evidence="1">
        <text>(R)-pantoate + beta-alanine + ATP = (R)-pantothenate + AMP + diphosphate + H(+)</text>
        <dbReference type="Rhea" id="RHEA:10912"/>
        <dbReference type="ChEBI" id="CHEBI:15378"/>
        <dbReference type="ChEBI" id="CHEBI:15980"/>
        <dbReference type="ChEBI" id="CHEBI:29032"/>
        <dbReference type="ChEBI" id="CHEBI:30616"/>
        <dbReference type="ChEBI" id="CHEBI:33019"/>
        <dbReference type="ChEBI" id="CHEBI:57966"/>
        <dbReference type="ChEBI" id="CHEBI:456215"/>
        <dbReference type="EC" id="6.3.2.1"/>
    </reaction>
</comment>
<comment type="pathway">
    <text evidence="1">Cofactor biosynthesis; (R)-pantothenate biosynthesis; (R)-pantothenate from (R)-pantoate and beta-alanine: step 1/1.</text>
</comment>
<comment type="subunit">
    <text evidence="1">Homodimer.</text>
</comment>
<comment type="subcellular location">
    <subcellularLocation>
        <location evidence="1">Cytoplasm</location>
    </subcellularLocation>
</comment>
<comment type="miscellaneous">
    <text evidence="1">The reaction proceeds by a bi uni uni bi ping pong mechanism.</text>
</comment>
<comment type="similarity">
    <text evidence="1">Belongs to the pantothenate synthetase family.</text>
</comment>
<sequence length="283" mass="31739">MIVTDKISDVRNIIKEQKLSGKKIGLVPTMGYLHEGHLSLVRIAKKHSDFVAVSIFVNPIQFGPNEDFDRYPRDLERDLKLLEKEGCDLVFAPSVEEMYPSELLTTVNVDKITEKLCGAFRPGHFKGVTTVVAKLFNIFTPDIAVFGQKDAQQVAVIKKMVEDLNFPVEIIKAPIVRESDGLAMSSRNVYLNPEERKAALILSKSLKEAEKLLLNGERNANTIIKKVNEVLNSEPLCKVQYVSCVHPDTLEDLTYIKDKALIAIACFIGTTRLIDNLLWGENI</sequence>
<protein>
    <recommendedName>
        <fullName evidence="1">Pantothenate synthetase</fullName>
        <shortName evidence="1">PS</shortName>
        <ecNumber evidence="1">6.3.2.1</ecNumber>
    </recommendedName>
    <alternativeName>
        <fullName evidence="1">Pantoate--beta-alanine ligase</fullName>
    </alternativeName>
    <alternativeName>
        <fullName evidence="1">Pantoate-activating enzyme</fullName>
    </alternativeName>
</protein>
<evidence type="ECO:0000255" key="1">
    <source>
        <dbReference type="HAMAP-Rule" id="MF_00158"/>
    </source>
</evidence>
<gene>
    <name evidence="1" type="primary">panC</name>
    <name type="ordered locus">Teth514_0426</name>
</gene>
<feature type="chain" id="PRO_1000097121" description="Pantothenate synthetase">
    <location>
        <begin position="1"/>
        <end position="283"/>
    </location>
</feature>
<feature type="active site" description="Proton donor" evidence="1">
    <location>
        <position position="37"/>
    </location>
</feature>
<feature type="binding site" evidence="1">
    <location>
        <begin position="30"/>
        <end position="37"/>
    </location>
    <ligand>
        <name>ATP</name>
        <dbReference type="ChEBI" id="CHEBI:30616"/>
    </ligand>
</feature>
<feature type="binding site" evidence="1">
    <location>
        <position position="61"/>
    </location>
    <ligand>
        <name>(R)-pantoate</name>
        <dbReference type="ChEBI" id="CHEBI:15980"/>
    </ligand>
</feature>
<feature type="binding site" evidence="1">
    <location>
        <position position="61"/>
    </location>
    <ligand>
        <name>beta-alanine</name>
        <dbReference type="ChEBI" id="CHEBI:57966"/>
    </ligand>
</feature>
<feature type="binding site" evidence="1">
    <location>
        <begin position="147"/>
        <end position="150"/>
    </location>
    <ligand>
        <name>ATP</name>
        <dbReference type="ChEBI" id="CHEBI:30616"/>
    </ligand>
</feature>
<feature type="binding site" evidence="1">
    <location>
        <position position="153"/>
    </location>
    <ligand>
        <name>(R)-pantoate</name>
        <dbReference type="ChEBI" id="CHEBI:15980"/>
    </ligand>
</feature>
<feature type="binding site" evidence="1">
    <location>
        <position position="176"/>
    </location>
    <ligand>
        <name>ATP</name>
        <dbReference type="ChEBI" id="CHEBI:30616"/>
    </ligand>
</feature>
<feature type="binding site" evidence="1">
    <location>
        <begin position="184"/>
        <end position="187"/>
    </location>
    <ligand>
        <name>ATP</name>
        <dbReference type="ChEBI" id="CHEBI:30616"/>
    </ligand>
</feature>
<organism>
    <name type="scientific">Thermoanaerobacter sp. (strain X514)</name>
    <dbReference type="NCBI Taxonomy" id="399726"/>
    <lineage>
        <taxon>Bacteria</taxon>
        <taxon>Bacillati</taxon>
        <taxon>Bacillota</taxon>
        <taxon>Clostridia</taxon>
        <taxon>Thermoanaerobacterales</taxon>
        <taxon>Thermoanaerobacteraceae</taxon>
        <taxon>Thermoanaerobacter</taxon>
    </lineage>
</organism>